<proteinExistence type="inferred from homology"/>
<protein>
    <recommendedName>
        <fullName evidence="1">5-amino-6-(D-ribitylamino)uracil--L-tyrosine 4-hydroxyphenyl transferase</fullName>
        <ecNumber evidence="1">2.5.1.147</ecNumber>
    </recommendedName>
    <alternativeName>
        <fullName evidence="1">FO synthase subunit 2</fullName>
    </alternativeName>
</protein>
<name>COFH_METHJ</name>
<feature type="chain" id="PRO_1000215707" description="5-amino-6-(D-ribitylamino)uracil--L-tyrosine 4-hydroxyphenyl transferase">
    <location>
        <begin position="1"/>
        <end position="366"/>
    </location>
</feature>
<feature type="domain" description="Radical SAM core" evidence="2">
    <location>
        <begin position="51"/>
        <end position="290"/>
    </location>
</feature>
<feature type="binding site" evidence="1">
    <location>
        <position position="70"/>
    </location>
    <ligand>
        <name>[4Fe-4S] cluster</name>
        <dbReference type="ChEBI" id="CHEBI:49883"/>
        <note>4Fe-4S-S-AdoMet</note>
    </ligand>
</feature>
<feature type="binding site" evidence="1">
    <location>
        <position position="74"/>
    </location>
    <ligand>
        <name>[4Fe-4S] cluster</name>
        <dbReference type="ChEBI" id="CHEBI:49883"/>
        <note>4Fe-4S-S-AdoMet</note>
    </ligand>
</feature>
<feature type="binding site" evidence="1">
    <location>
        <position position="77"/>
    </location>
    <ligand>
        <name>[4Fe-4S] cluster</name>
        <dbReference type="ChEBI" id="CHEBI:49883"/>
        <note>4Fe-4S-S-AdoMet</note>
    </ligand>
</feature>
<dbReference type="EC" id="2.5.1.147" evidence="1"/>
<dbReference type="EMBL" id="CP000254">
    <property type="protein sequence ID" value="ABD42658.1"/>
    <property type="molecule type" value="Genomic_DNA"/>
</dbReference>
<dbReference type="RefSeq" id="WP_011449911.1">
    <property type="nucleotide sequence ID" value="NC_007796.1"/>
</dbReference>
<dbReference type="SMR" id="Q2FSC7"/>
<dbReference type="FunCoup" id="Q2FSC7">
    <property type="interactions" value="87"/>
</dbReference>
<dbReference type="STRING" id="323259.Mhun_2970"/>
<dbReference type="EnsemblBacteria" id="ABD42658">
    <property type="protein sequence ID" value="ABD42658"/>
    <property type="gene ID" value="Mhun_2970"/>
</dbReference>
<dbReference type="GeneID" id="3922453"/>
<dbReference type="KEGG" id="mhu:Mhun_2970"/>
<dbReference type="eggNOG" id="arCOG00656">
    <property type="taxonomic scope" value="Archaea"/>
</dbReference>
<dbReference type="HOGENOM" id="CLU_040406_1_1_2"/>
<dbReference type="InParanoid" id="Q2FSC7"/>
<dbReference type="OrthoDB" id="8186at2157"/>
<dbReference type="UniPathway" id="UPA00072"/>
<dbReference type="Proteomes" id="UP000001941">
    <property type="component" value="Chromosome"/>
</dbReference>
<dbReference type="GO" id="GO:0051539">
    <property type="term" value="F:4 iron, 4 sulfur cluster binding"/>
    <property type="evidence" value="ECO:0007669"/>
    <property type="project" value="UniProtKB-KW"/>
</dbReference>
<dbReference type="GO" id="GO:0141093">
    <property type="term" value="F:5-amino-6-(D-ribitylamino)uracil--L-tyrosine 4-hydroxyphenyl transferase activity"/>
    <property type="evidence" value="ECO:0007669"/>
    <property type="project" value="UniProtKB-EC"/>
</dbReference>
<dbReference type="GO" id="GO:0044689">
    <property type="term" value="F:7,8-didemethyl-8-hydroxy-5-deazariboflavin synthase activity"/>
    <property type="evidence" value="ECO:0007669"/>
    <property type="project" value="TreeGrafter"/>
</dbReference>
<dbReference type="GO" id="GO:0005506">
    <property type="term" value="F:iron ion binding"/>
    <property type="evidence" value="ECO:0007669"/>
    <property type="project" value="UniProtKB-UniRule"/>
</dbReference>
<dbReference type="CDD" id="cd01335">
    <property type="entry name" value="Radical_SAM"/>
    <property type="match status" value="1"/>
</dbReference>
<dbReference type="Gene3D" id="3.20.20.70">
    <property type="entry name" value="Aldolase class I"/>
    <property type="match status" value="1"/>
</dbReference>
<dbReference type="HAMAP" id="MF_01612">
    <property type="entry name" value="FO_synth_sub2"/>
    <property type="match status" value="1"/>
</dbReference>
<dbReference type="InterPro" id="IPR013785">
    <property type="entry name" value="Aldolase_TIM"/>
</dbReference>
<dbReference type="InterPro" id="IPR045567">
    <property type="entry name" value="CofH/MnqC-like_C"/>
</dbReference>
<dbReference type="InterPro" id="IPR019940">
    <property type="entry name" value="CofH_family"/>
</dbReference>
<dbReference type="InterPro" id="IPR006638">
    <property type="entry name" value="Elp3/MiaA/NifB-like_rSAM"/>
</dbReference>
<dbReference type="InterPro" id="IPR034405">
    <property type="entry name" value="F420"/>
</dbReference>
<dbReference type="InterPro" id="IPR020050">
    <property type="entry name" value="FO_synthase_su2"/>
</dbReference>
<dbReference type="InterPro" id="IPR007197">
    <property type="entry name" value="rSAM"/>
</dbReference>
<dbReference type="NCBIfam" id="TIGR00423">
    <property type="entry name" value="CofH family radical SAM protein"/>
    <property type="match status" value="1"/>
</dbReference>
<dbReference type="NCBIfam" id="TIGR03551">
    <property type="entry name" value="F420_cofH"/>
    <property type="match status" value="1"/>
</dbReference>
<dbReference type="NCBIfam" id="NF005609">
    <property type="entry name" value="PRK07360.1"/>
    <property type="match status" value="1"/>
</dbReference>
<dbReference type="PANTHER" id="PTHR43076">
    <property type="entry name" value="FO SYNTHASE (COFH)"/>
    <property type="match status" value="1"/>
</dbReference>
<dbReference type="PANTHER" id="PTHR43076:SF1">
    <property type="entry name" value="LIPOYL SYNTHASE 2"/>
    <property type="match status" value="1"/>
</dbReference>
<dbReference type="Pfam" id="PF19288">
    <property type="entry name" value="CofH_C"/>
    <property type="match status" value="1"/>
</dbReference>
<dbReference type="Pfam" id="PF04055">
    <property type="entry name" value="Radical_SAM"/>
    <property type="match status" value="1"/>
</dbReference>
<dbReference type="PIRSF" id="PIRSF004762">
    <property type="entry name" value="CHP00423"/>
    <property type="match status" value="1"/>
</dbReference>
<dbReference type="SFLD" id="SFLDF00293">
    <property type="entry name" value="((2_3_4_5-tetrahydroxypentyl)a"/>
    <property type="match status" value="1"/>
</dbReference>
<dbReference type="SFLD" id="SFLDG01082">
    <property type="entry name" value="B12-binding_domain_containing"/>
    <property type="match status" value="1"/>
</dbReference>
<dbReference type="SFLD" id="SFLDG01389">
    <property type="entry name" value="menaquinone_synthsis_involved"/>
    <property type="match status" value="1"/>
</dbReference>
<dbReference type="SFLD" id="SFLDS00029">
    <property type="entry name" value="Radical_SAM"/>
    <property type="match status" value="1"/>
</dbReference>
<dbReference type="SMART" id="SM00729">
    <property type="entry name" value="Elp3"/>
    <property type="match status" value="1"/>
</dbReference>
<dbReference type="SUPFAM" id="SSF102114">
    <property type="entry name" value="Radical SAM enzymes"/>
    <property type="match status" value="1"/>
</dbReference>
<dbReference type="PROSITE" id="PS51918">
    <property type="entry name" value="RADICAL_SAM"/>
    <property type="match status" value="1"/>
</dbReference>
<accession>Q2FSC7</accession>
<keyword id="KW-0004">4Fe-4S</keyword>
<keyword id="KW-0408">Iron</keyword>
<keyword id="KW-0411">Iron-sulfur</keyword>
<keyword id="KW-0479">Metal-binding</keyword>
<keyword id="KW-1185">Reference proteome</keyword>
<keyword id="KW-0949">S-adenosyl-L-methionine</keyword>
<keyword id="KW-0808">Transferase</keyword>
<reference key="1">
    <citation type="journal article" date="2016" name="Stand. Genomic Sci.">
        <title>Complete genome sequence of Methanospirillum hungatei type strain JF1.</title>
        <authorList>
            <person name="Gunsalus R.P."/>
            <person name="Cook L.E."/>
            <person name="Crable B."/>
            <person name="Rohlin L."/>
            <person name="McDonald E."/>
            <person name="Mouttaki H."/>
            <person name="Sieber J.R."/>
            <person name="Poweleit N."/>
            <person name="Zhou H."/>
            <person name="Lapidus A.L."/>
            <person name="Daligault H.E."/>
            <person name="Land M."/>
            <person name="Gilna P."/>
            <person name="Ivanova N."/>
            <person name="Kyrpides N."/>
            <person name="Culley D.E."/>
            <person name="McInerney M.J."/>
        </authorList>
    </citation>
    <scope>NUCLEOTIDE SEQUENCE [LARGE SCALE GENOMIC DNA]</scope>
    <source>
        <strain>ATCC 27890 / DSM 864 / NBRC 100397 / JF-1</strain>
    </source>
</reference>
<organism>
    <name type="scientific">Methanospirillum hungatei JF-1 (strain ATCC 27890 / DSM 864 / NBRC 100397 / JF-1)</name>
    <dbReference type="NCBI Taxonomy" id="323259"/>
    <lineage>
        <taxon>Archaea</taxon>
        <taxon>Methanobacteriati</taxon>
        <taxon>Methanobacteriota</taxon>
        <taxon>Stenosarchaea group</taxon>
        <taxon>Methanomicrobia</taxon>
        <taxon>Methanomicrobiales</taxon>
        <taxon>Methanospirillaceae</taxon>
        <taxon>Methanospirillum</taxon>
    </lineage>
</organism>
<gene>
    <name evidence="1" type="primary">cofH</name>
    <name type="ordered locus">Mhun_2970</name>
</gene>
<sequence length="366" mass="40190">MTLDLHELKTLLDDVSEGHRLTVDEAENLFKVRDRSSFFITAAADALREKRCGNAITWVKNQNINCSNVCVNSCGFCGYSCKPGDSKAFELTPELVGEKAALAASRGVTEICTVSGLHPAYDLNSYLSIYQAIRENAPGVHIHASNPMEVAYAARKTGCSTREVLEAFRDAGVGTLCGTAAEILVDEIRDVICPEKISTDDWVRIIKESHNAGIRSTATIMYGHCESVTDQVRHLSILRDIQDETHGFTEFVPLSFIHPGTPLYRKGMARPGATGREDMLMIAISRLFLDNFTNIQVSWVKLGLKMVQIGLMSGANDIGGTLYEESISSSAGAKAGEYLDPADMRYISEDLGRTLVERRTDYSPVH</sequence>
<evidence type="ECO:0000255" key="1">
    <source>
        <dbReference type="HAMAP-Rule" id="MF_01612"/>
    </source>
</evidence>
<evidence type="ECO:0000255" key="2">
    <source>
        <dbReference type="PROSITE-ProRule" id="PRU01266"/>
    </source>
</evidence>
<comment type="function">
    <text evidence="1">Catalyzes the radical-mediated synthesis of 5-amino-5-(4-hydroxybenzyl)-6-(D-ribitylimino)-5,6-dihydrouracil from 5-amino-6-(D-ribitylamino)uracil and L-tyrosine.</text>
</comment>
<comment type="catalytic activity">
    <reaction evidence="1">
        <text>5-amino-6-(D-ribitylamino)uracil + L-tyrosine + S-adenosyl-L-methionine = 5-amino-5-(4-hydroxybenzyl)-6-(D-ribitylimino)-5,6-dihydrouracil + 2-iminoacetate + 5'-deoxyadenosine + L-methionine + H(+)</text>
        <dbReference type="Rhea" id="RHEA:55200"/>
        <dbReference type="ChEBI" id="CHEBI:15378"/>
        <dbReference type="ChEBI" id="CHEBI:15934"/>
        <dbReference type="ChEBI" id="CHEBI:17319"/>
        <dbReference type="ChEBI" id="CHEBI:57844"/>
        <dbReference type="ChEBI" id="CHEBI:58315"/>
        <dbReference type="ChEBI" id="CHEBI:59789"/>
        <dbReference type="ChEBI" id="CHEBI:77846"/>
        <dbReference type="ChEBI" id="CHEBI:85936"/>
        <dbReference type="EC" id="2.5.1.147"/>
    </reaction>
</comment>
<comment type="cofactor">
    <cofactor evidence="1">
        <name>[4Fe-4S] cluster</name>
        <dbReference type="ChEBI" id="CHEBI:49883"/>
    </cofactor>
    <text evidence="1">Binds 1 [4Fe-4S] cluster. The cluster is coordinated with 3 cysteines and an exchangeable S-adenosyl-L-methionine.</text>
</comment>
<comment type="pathway">
    <text evidence="1">Cofactor biosynthesis; coenzyme F0 biosynthesis.</text>
</comment>
<comment type="subunit">
    <text evidence="1">Consists of two subunits, CofG and CofH.</text>
</comment>
<comment type="similarity">
    <text evidence="1">Belongs to the radical SAM superfamily. CofH family.</text>
</comment>